<keyword id="KW-0210">Decarboxylase</keyword>
<keyword id="KW-0456">Lyase</keyword>
<keyword id="KW-0665">Pyrimidine biosynthesis</keyword>
<sequence length="232" mass="25217">MIDQKVIVALDYDNQADALAFVDRIDPASCRLKVGKEMFTLFGPDFVRELHKRGFSVFLDLKFHDIPNTCSKAVRAAAELGVWMVNVHASGGERMMTASREILEPYGKDRPLLIGVTVLTSMEQSDLAGIGLDVAPQEHVIRLATLTKNSGLDGVVCSAQESSLLKNELGKEFKLVTPGIRPLGSEQGDQRRIMTPLEAVQAGSDYLVIGRPITQAVDPAAVLQAINTSLTK</sequence>
<dbReference type="EC" id="4.1.1.23" evidence="1"/>
<dbReference type="EMBL" id="AE016795">
    <property type="protein sequence ID" value="AAO11308.1"/>
    <property type="molecule type" value="Genomic_DNA"/>
</dbReference>
<dbReference type="RefSeq" id="WP_011080793.1">
    <property type="nucleotide sequence ID" value="NC_004459.3"/>
</dbReference>
<dbReference type="SMR" id="Q8D8J6"/>
<dbReference type="KEGG" id="vvu:VV1_2977"/>
<dbReference type="HOGENOM" id="CLU_067069_0_0_6"/>
<dbReference type="UniPathway" id="UPA00070">
    <property type="reaction ID" value="UER00120"/>
</dbReference>
<dbReference type="Proteomes" id="UP000002275">
    <property type="component" value="Chromosome 1"/>
</dbReference>
<dbReference type="GO" id="GO:0005829">
    <property type="term" value="C:cytosol"/>
    <property type="evidence" value="ECO:0007669"/>
    <property type="project" value="TreeGrafter"/>
</dbReference>
<dbReference type="GO" id="GO:0004590">
    <property type="term" value="F:orotidine-5'-phosphate decarboxylase activity"/>
    <property type="evidence" value="ECO:0007669"/>
    <property type="project" value="UniProtKB-UniRule"/>
</dbReference>
<dbReference type="GO" id="GO:0006207">
    <property type="term" value="P:'de novo' pyrimidine nucleobase biosynthetic process"/>
    <property type="evidence" value="ECO:0007669"/>
    <property type="project" value="InterPro"/>
</dbReference>
<dbReference type="GO" id="GO:0044205">
    <property type="term" value="P:'de novo' UMP biosynthetic process"/>
    <property type="evidence" value="ECO:0007669"/>
    <property type="project" value="UniProtKB-UniRule"/>
</dbReference>
<dbReference type="CDD" id="cd04725">
    <property type="entry name" value="OMP_decarboxylase_like"/>
    <property type="match status" value="1"/>
</dbReference>
<dbReference type="FunFam" id="3.20.20.70:FF:000015">
    <property type="entry name" value="Orotidine 5'-phosphate decarboxylase"/>
    <property type="match status" value="1"/>
</dbReference>
<dbReference type="Gene3D" id="3.20.20.70">
    <property type="entry name" value="Aldolase class I"/>
    <property type="match status" value="1"/>
</dbReference>
<dbReference type="HAMAP" id="MF_01200_B">
    <property type="entry name" value="OMPdecase_type1_B"/>
    <property type="match status" value="1"/>
</dbReference>
<dbReference type="InterPro" id="IPR013785">
    <property type="entry name" value="Aldolase_TIM"/>
</dbReference>
<dbReference type="InterPro" id="IPR014732">
    <property type="entry name" value="OMPdecase"/>
</dbReference>
<dbReference type="InterPro" id="IPR018089">
    <property type="entry name" value="OMPdecase_AS"/>
</dbReference>
<dbReference type="InterPro" id="IPR047596">
    <property type="entry name" value="OMPdecase_bac"/>
</dbReference>
<dbReference type="InterPro" id="IPR001754">
    <property type="entry name" value="OMPdeCOase_dom"/>
</dbReference>
<dbReference type="InterPro" id="IPR011060">
    <property type="entry name" value="RibuloseP-bd_barrel"/>
</dbReference>
<dbReference type="NCBIfam" id="NF001273">
    <property type="entry name" value="PRK00230.1"/>
    <property type="match status" value="1"/>
</dbReference>
<dbReference type="NCBIfam" id="TIGR01740">
    <property type="entry name" value="pyrF"/>
    <property type="match status" value="1"/>
</dbReference>
<dbReference type="PANTHER" id="PTHR32119">
    <property type="entry name" value="OROTIDINE 5'-PHOSPHATE DECARBOXYLASE"/>
    <property type="match status" value="1"/>
</dbReference>
<dbReference type="PANTHER" id="PTHR32119:SF2">
    <property type="entry name" value="OROTIDINE 5'-PHOSPHATE DECARBOXYLASE"/>
    <property type="match status" value="1"/>
</dbReference>
<dbReference type="Pfam" id="PF00215">
    <property type="entry name" value="OMPdecase"/>
    <property type="match status" value="1"/>
</dbReference>
<dbReference type="SMART" id="SM00934">
    <property type="entry name" value="OMPdecase"/>
    <property type="match status" value="1"/>
</dbReference>
<dbReference type="SUPFAM" id="SSF51366">
    <property type="entry name" value="Ribulose-phoshate binding barrel"/>
    <property type="match status" value="1"/>
</dbReference>
<dbReference type="PROSITE" id="PS00156">
    <property type="entry name" value="OMPDECASE"/>
    <property type="match status" value="1"/>
</dbReference>
<evidence type="ECO:0000255" key="1">
    <source>
        <dbReference type="HAMAP-Rule" id="MF_01200"/>
    </source>
</evidence>
<name>PYRF_VIBVU</name>
<feature type="chain" id="PRO_0000134598" description="Orotidine 5'-phosphate decarboxylase">
    <location>
        <begin position="1"/>
        <end position="232"/>
    </location>
</feature>
<feature type="active site" description="Proton donor" evidence="1">
    <location>
        <position position="62"/>
    </location>
</feature>
<feature type="binding site" evidence="1">
    <location>
        <position position="11"/>
    </location>
    <ligand>
        <name>substrate</name>
    </ligand>
</feature>
<feature type="binding site" evidence="1">
    <location>
        <position position="33"/>
    </location>
    <ligand>
        <name>substrate</name>
    </ligand>
</feature>
<feature type="binding site" evidence="1">
    <location>
        <begin position="60"/>
        <end position="69"/>
    </location>
    <ligand>
        <name>substrate</name>
    </ligand>
</feature>
<feature type="binding site" evidence="1">
    <location>
        <position position="120"/>
    </location>
    <ligand>
        <name>substrate</name>
    </ligand>
</feature>
<feature type="binding site" evidence="1">
    <location>
        <position position="181"/>
    </location>
    <ligand>
        <name>substrate</name>
    </ligand>
</feature>
<feature type="binding site" evidence="1">
    <location>
        <position position="190"/>
    </location>
    <ligand>
        <name>substrate</name>
    </ligand>
</feature>
<feature type="binding site" evidence="1">
    <location>
        <position position="210"/>
    </location>
    <ligand>
        <name>substrate</name>
    </ligand>
</feature>
<feature type="binding site" evidence="1">
    <location>
        <position position="211"/>
    </location>
    <ligand>
        <name>substrate</name>
    </ligand>
</feature>
<protein>
    <recommendedName>
        <fullName evidence="1">Orotidine 5'-phosphate decarboxylase</fullName>
        <ecNumber evidence="1">4.1.1.23</ecNumber>
    </recommendedName>
    <alternativeName>
        <fullName evidence="1">OMP decarboxylase</fullName>
        <shortName evidence="1">OMPDCase</shortName>
        <shortName evidence="1">OMPdecase</shortName>
    </alternativeName>
</protein>
<comment type="function">
    <text evidence="1">Catalyzes the decarboxylation of orotidine 5'-monophosphate (OMP) to uridine 5'-monophosphate (UMP).</text>
</comment>
<comment type="catalytic activity">
    <reaction evidence="1">
        <text>orotidine 5'-phosphate + H(+) = UMP + CO2</text>
        <dbReference type="Rhea" id="RHEA:11596"/>
        <dbReference type="ChEBI" id="CHEBI:15378"/>
        <dbReference type="ChEBI" id="CHEBI:16526"/>
        <dbReference type="ChEBI" id="CHEBI:57538"/>
        <dbReference type="ChEBI" id="CHEBI:57865"/>
        <dbReference type="EC" id="4.1.1.23"/>
    </reaction>
</comment>
<comment type="pathway">
    <text evidence="1">Pyrimidine metabolism; UMP biosynthesis via de novo pathway; UMP from orotate: step 2/2.</text>
</comment>
<comment type="subunit">
    <text evidence="1">Homodimer.</text>
</comment>
<comment type="similarity">
    <text evidence="1">Belongs to the OMP decarboxylase family. Type 1 subfamily.</text>
</comment>
<reference key="1">
    <citation type="submission" date="2002-12" db="EMBL/GenBank/DDBJ databases">
        <title>Complete genome sequence of Vibrio vulnificus CMCP6.</title>
        <authorList>
            <person name="Rhee J.H."/>
            <person name="Kim S.Y."/>
            <person name="Chung S.S."/>
            <person name="Kim J.J."/>
            <person name="Moon Y.H."/>
            <person name="Jeong H."/>
            <person name="Choy H.E."/>
        </authorList>
    </citation>
    <scope>NUCLEOTIDE SEQUENCE [LARGE SCALE GENOMIC DNA]</scope>
    <source>
        <strain>CMCP6</strain>
    </source>
</reference>
<organism>
    <name type="scientific">Vibrio vulnificus (strain CMCP6)</name>
    <dbReference type="NCBI Taxonomy" id="216895"/>
    <lineage>
        <taxon>Bacteria</taxon>
        <taxon>Pseudomonadati</taxon>
        <taxon>Pseudomonadota</taxon>
        <taxon>Gammaproteobacteria</taxon>
        <taxon>Vibrionales</taxon>
        <taxon>Vibrionaceae</taxon>
        <taxon>Vibrio</taxon>
    </lineage>
</organism>
<gene>
    <name evidence="1" type="primary">pyrF</name>
    <name type="ordered locus">VV1_2977</name>
</gene>
<accession>Q8D8J6</accession>
<proteinExistence type="inferred from homology"/>